<proteinExistence type="inferred from homology"/>
<protein>
    <recommendedName>
        <fullName evidence="1">Trp operon repressor</fullName>
    </recommendedName>
</protein>
<accession>Q0SX19</accession>
<sequence length="108" mass="12355">MAQQSPYSAAMAEQRHQEWLRFVDLLKNAYQNDLHLPLLNLMLTPDEREALGTRVRIVEELLRGEMSQRELKNELGAGIATITRGSNSLKAAPVELRQWLEEVLLKSD</sequence>
<name>TRPR_SHIF8</name>
<keyword id="KW-0963">Cytoplasm</keyword>
<keyword id="KW-0238">DNA-binding</keyword>
<keyword id="KW-0678">Repressor</keyword>
<keyword id="KW-0804">Transcription</keyword>
<keyword id="KW-0805">Transcription regulation</keyword>
<dbReference type="EMBL" id="CP000266">
    <property type="protein sequence ID" value="ABF06396.1"/>
    <property type="molecule type" value="Genomic_DNA"/>
</dbReference>
<dbReference type="RefSeq" id="WP_000068679.1">
    <property type="nucleotide sequence ID" value="NC_008258.1"/>
</dbReference>
<dbReference type="SMR" id="Q0SX19"/>
<dbReference type="GeneID" id="93777452"/>
<dbReference type="KEGG" id="sfv:SFV_4427"/>
<dbReference type="HOGENOM" id="CLU_147939_0_0_6"/>
<dbReference type="Proteomes" id="UP000000659">
    <property type="component" value="Chromosome"/>
</dbReference>
<dbReference type="GO" id="GO:0005737">
    <property type="term" value="C:cytoplasm"/>
    <property type="evidence" value="ECO:0007669"/>
    <property type="project" value="UniProtKB-SubCell"/>
</dbReference>
<dbReference type="GO" id="GO:0003700">
    <property type="term" value="F:DNA-binding transcription factor activity"/>
    <property type="evidence" value="ECO:0007669"/>
    <property type="project" value="InterPro"/>
</dbReference>
<dbReference type="GO" id="GO:0043565">
    <property type="term" value="F:sequence-specific DNA binding"/>
    <property type="evidence" value="ECO:0007669"/>
    <property type="project" value="InterPro"/>
</dbReference>
<dbReference type="GO" id="GO:0045892">
    <property type="term" value="P:negative regulation of DNA-templated transcription"/>
    <property type="evidence" value="ECO:0007669"/>
    <property type="project" value="UniProtKB-UniRule"/>
</dbReference>
<dbReference type="FunFam" id="1.10.1270.10:FF:000001">
    <property type="entry name" value="Trp operon repressor"/>
    <property type="match status" value="1"/>
</dbReference>
<dbReference type="Gene3D" id="1.10.1270.10">
    <property type="entry name" value="TrpR-like"/>
    <property type="match status" value="1"/>
</dbReference>
<dbReference type="HAMAP" id="MF_00475">
    <property type="entry name" value="Trp_repressor"/>
    <property type="match status" value="1"/>
</dbReference>
<dbReference type="InterPro" id="IPR000831">
    <property type="entry name" value="Trp_repress"/>
</dbReference>
<dbReference type="InterPro" id="IPR013335">
    <property type="entry name" value="Trp_repress_bac"/>
</dbReference>
<dbReference type="InterPro" id="IPR010921">
    <property type="entry name" value="Trp_repressor/repl_initiator"/>
</dbReference>
<dbReference type="InterPro" id="IPR038116">
    <property type="entry name" value="TrpR-like_sf"/>
</dbReference>
<dbReference type="NCBIfam" id="TIGR01321">
    <property type="entry name" value="TrpR"/>
    <property type="match status" value="1"/>
</dbReference>
<dbReference type="PANTHER" id="PTHR38025">
    <property type="entry name" value="TRP OPERON REPRESSOR"/>
    <property type="match status" value="1"/>
</dbReference>
<dbReference type="PANTHER" id="PTHR38025:SF1">
    <property type="entry name" value="TRP OPERON REPRESSOR"/>
    <property type="match status" value="1"/>
</dbReference>
<dbReference type="Pfam" id="PF01371">
    <property type="entry name" value="Trp_repressor"/>
    <property type="match status" value="1"/>
</dbReference>
<dbReference type="PIRSF" id="PIRSF003196">
    <property type="entry name" value="Trp_repressor"/>
    <property type="match status" value="1"/>
</dbReference>
<dbReference type="SUPFAM" id="SSF48295">
    <property type="entry name" value="TrpR-like"/>
    <property type="match status" value="1"/>
</dbReference>
<comment type="function">
    <text evidence="1">This protein is an aporepressor. When complexed with L-tryptophan it binds the operator region of the trp operon (5'-ACTAGT-'3') and prevents the initiation of transcription. The complex also regulates trp repressor biosynthesis by binding to its regulatory region.</text>
</comment>
<comment type="subunit">
    <text evidence="1">Homodimer.</text>
</comment>
<comment type="subcellular location">
    <subcellularLocation>
        <location evidence="1">Cytoplasm</location>
    </subcellularLocation>
</comment>
<comment type="similarity">
    <text evidence="1">Belongs to the TrpR family.</text>
</comment>
<reference key="1">
    <citation type="journal article" date="2006" name="BMC Genomics">
        <title>Complete genome sequence of Shigella flexneri 5b and comparison with Shigella flexneri 2a.</title>
        <authorList>
            <person name="Nie H."/>
            <person name="Yang F."/>
            <person name="Zhang X."/>
            <person name="Yang J."/>
            <person name="Chen L."/>
            <person name="Wang J."/>
            <person name="Xiong Z."/>
            <person name="Peng J."/>
            <person name="Sun L."/>
            <person name="Dong J."/>
            <person name="Xue Y."/>
            <person name="Xu X."/>
            <person name="Chen S."/>
            <person name="Yao Z."/>
            <person name="Shen Y."/>
            <person name="Jin Q."/>
        </authorList>
    </citation>
    <scope>NUCLEOTIDE SEQUENCE [LARGE SCALE GENOMIC DNA]</scope>
    <source>
        <strain>8401</strain>
    </source>
</reference>
<feature type="chain" id="PRO_1000014050" description="Trp operon repressor">
    <location>
        <begin position="1"/>
        <end position="108"/>
    </location>
</feature>
<feature type="DNA-binding region" evidence="1">
    <location>
        <begin position="68"/>
        <end position="91"/>
    </location>
</feature>
<organism>
    <name type="scientific">Shigella flexneri serotype 5b (strain 8401)</name>
    <dbReference type="NCBI Taxonomy" id="373384"/>
    <lineage>
        <taxon>Bacteria</taxon>
        <taxon>Pseudomonadati</taxon>
        <taxon>Pseudomonadota</taxon>
        <taxon>Gammaproteobacteria</taxon>
        <taxon>Enterobacterales</taxon>
        <taxon>Enterobacteriaceae</taxon>
        <taxon>Shigella</taxon>
    </lineage>
</organism>
<gene>
    <name evidence="1" type="primary">trpR</name>
    <name type="ordered locus">SFV_4427</name>
</gene>
<evidence type="ECO:0000255" key="1">
    <source>
        <dbReference type="HAMAP-Rule" id="MF_00475"/>
    </source>
</evidence>